<keyword id="KW-0378">Hydrolase</keyword>
<keyword id="KW-0488">Methylation</keyword>
<keyword id="KW-0597">Phosphoprotein</keyword>
<keyword id="KW-1185">Reference proteome</keyword>
<keyword id="KW-0719">Serine esterase</keyword>
<proteinExistence type="evidence at transcript level"/>
<dbReference type="EC" id="3.1.1.89"/>
<dbReference type="EMBL" id="CR861290">
    <property type="protein sequence ID" value="CAH93357.1"/>
    <property type="molecule type" value="mRNA"/>
</dbReference>
<dbReference type="RefSeq" id="NP_001126977.1">
    <property type="nucleotide sequence ID" value="NM_001133505.1"/>
</dbReference>
<dbReference type="SMR" id="Q5R4F9"/>
<dbReference type="STRING" id="9601.ENSPPYP00000004196"/>
<dbReference type="ESTHER" id="ponab-ppme1">
    <property type="family name" value="PPase_methylesterase_euk"/>
</dbReference>
<dbReference type="GeneID" id="100173996"/>
<dbReference type="KEGG" id="pon:100173996"/>
<dbReference type="CTD" id="51400"/>
<dbReference type="eggNOG" id="KOG2564">
    <property type="taxonomic scope" value="Eukaryota"/>
</dbReference>
<dbReference type="InParanoid" id="Q5R4F9"/>
<dbReference type="OrthoDB" id="194865at2759"/>
<dbReference type="Proteomes" id="UP000001595">
    <property type="component" value="Unplaced"/>
</dbReference>
<dbReference type="GO" id="GO:0051722">
    <property type="term" value="F:protein C-terminal methylesterase activity"/>
    <property type="evidence" value="ECO:0000250"/>
    <property type="project" value="UniProtKB"/>
</dbReference>
<dbReference type="GO" id="GO:0051721">
    <property type="term" value="F:protein phosphatase 2A binding"/>
    <property type="evidence" value="ECO:0000250"/>
    <property type="project" value="UniProtKB"/>
</dbReference>
<dbReference type="Gene3D" id="3.40.50.1820">
    <property type="entry name" value="alpha/beta hydrolase"/>
    <property type="match status" value="1"/>
</dbReference>
<dbReference type="InterPro" id="IPR000073">
    <property type="entry name" value="AB_hydrolase_1"/>
</dbReference>
<dbReference type="InterPro" id="IPR029058">
    <property type="entry name" value="AB_hydrolase_fold"/>
</dbReference>
<dbReference type="InterPro" id="IPR016812">
    <property type="entry name" value="PPase_methylesterase_euk"/>
</dbReference>
<dbReference type="PANTHER" id="PTHR14189:SF0">
    <property type="entry name" value="PROTEIN PHOSPHATASE METHYLESTERASE 1"/>
    <property type="match status" value="1"/>
</dbReference>
<dbReference type="PANTHER" id="PTHR14189">
    <property type="entry name" value="PROTEIN PHOSPHATASE METHYLESTERASE-1 RELATED"/>
    <property type="match status" value="1"/>
</dbReference>
<dbReference type="Pfam" id="PF12697">
    <property type="entry name" value="Abhydrolase_6"/>
    <property type="match status" value="1"/>
</dbReference>
<dbReference type="PIRSF" id="PIRSF022950">
    <property type="entry name" value="PPase_methylesterase_euk"/>
    <property type="match status" value="1"/>
</dbReference>
<dbReference type="SUPFAM" id="SSF53474">
    <property type="entry name" value="alpha/beta-Hydrolases"/>
    <property type="match status" value="1"/>
</dbReference>
<dbReference type="PROSITE" id="PS00120">
    <property type="entry name" value="LIPASE_SER"/>
    <property type="match status" value="1"/>
</dbReference>
<gene>
    <name type="primary">PPME1</name>
    <name type="synonym">PME1</name>
</gene>
<comment type="function">
    <text evidence="1">Demethylates proteins that have been reversibly carboxymethylated. Demethylates PPP2CB (in vitro) and PPP2CA. Binding to PPP2CA displaces the manganese ion and inactivates the enzyme (By similarity).</text>
</comment>
<comment type="catalytic activity">
    <reaction>
        <text>[phosphatase 2A protein]-C-terminal L-leucine methyl ester + H2O = [phosphatase 2A protein]-C-terminal L-leucine + methanol + H(+)</text>
        <dbReference type="Rhea" id="RHEA:48548"/>
        <dbReference type="Rhea" id="RHEA-COMP:12134"/>
        <dbReference type="Rhea" id="RHEA-COMP:12135"/>
        <dbReference type="ChEBI" id="CHEBI:15377"/>
        <dbReference type="ChEBI" id="CHEBI:15378"/>
        <dbReference type="ChEBI" id="CHEBI:17790"/>
        <dbReference type="ChEBI" id="CHEBI:90516"/>
        <dbReference type="ChEBI" id="CHEBI:90517"/>
        <dbReference type="EC" id="3.1.1.89"/>
    </reaction>
</comment>
<comment type="subunit">
    <text evidence="1">Binds PPP2CA and PPP2CB.</text>
</comment>
<comment type="PTM">
    <text evidence="1">Phosphorylated by SIK1 following increases in intracellular sodium, leading to dissociation from the protein phosphatase 2A (PP2A) complex and subsequent dephosphorylation of sodium/potassium-transporting ATPase ATP1A1.</text>
</comment>
<comment type="similarity">
    <text evidence="5">Belongs to the AB hydrolase superfamily.</text>
</comment>
<name>PPME1_PONAB</name>
<feature type="chain" id="PRO_0000090392" description="Protein phosphatase methylesterase 1">
    <location>
        <begin position="1"/>
        <end position="386"/>
    </location>
</feature>
<feature type="region of interest" description="Disordered" evidence="4">
    <location>
        <begin position="1"/>
        <end position="38"/>
    </location>
</feature>
<feature type="region of interest" description="Disordered" evidence="4">
    <location>
        <begin position="254"/>
        <end position="280"/>
    </location>
</feature>
<feature type="compositionally biased region" description="Acidic residues" evidence="4">
    <location>
        <begin position="254"/>
        <end position="265"/>
    </location>
</feature>
<feature type="compositionally biased region" description="Basic and acidic residues" evidence="4">
    <location>
        <begin position="268"/>
        <end position="280"/>
    </location>
</feature>
<feature type="active site" evidence="1">
    <location>
        <position position="156"/>
    </location>
</feature>
<feature type="active site" evidence="1">
    <location>
        <position position="349"/>
    </location>
</feature>
<feature type="modified residue" description="Phosphoserine" evidence="3">
    <location>
        <position position="15"/>
    </location>
</feature>
<feature type="modified residue" description="Asymmetric dimethylarginine; alternate" evidence="2">
    <location>
        <position position="16"/>
    </location>
</feature>
<feature type="modified residue" description="Omega-N-methylarginine; alternate" evidence="3">
    <location>
        <position position="16"/>
    </location>
</feature>
<feature type="modified residue" description="Phosphoserine" evidence="3">
    <location>
        <position position="42"/>
    </location>
</feature>
<protein>
    <recommendedName>
        <fullName>Protein phosphatase methylesterase 1</fullName>
        <shortName>PME-1</shortName>
        <ecNumber>3.1.1.89</ecNumber>
    </recommendedName>
</protein>
<evidence type="ECO:0000250" key="1"/>
<evidence type="ECO:0000250" key="2">
    <source>
        <dbReference type="UniProtKB" id="Q8BVQ5"/>
    </source>
</evidence>
<evidence type="ECO:0000250" key="3">
    <source>
        <dbReference type="UniProtKB" id="Q9Y570"/>
    </source>
</evidence>
<evidence type="ECO:0000256" key="4">
    <source>
        <dbReference type="SAM" id="MobiDB-lite"/>
    </source>
</evidence>
<evidence type="ECO:0000305" key="5"/>
<organism>
    <name type="scientific">Pongo abelii</name>
    <name type="common">Sumatran orangutan</name>
    <name type="synonym">Pongo pygmaeus abelii</name>
    <dbReference type="NCBI Taxonomy" id="9601"/>
    <lineage>
        <taxon>Eukaryota</taxon>
        <taxon>Metazoa</taxon>
        <taxon>Chordata</taxon>
        <taxon>Craniata</taxon>
        <taxon>Vertebrata</taxon>
        <taxon>Euteleostomi</taxon>
        <taxon>Mammalia</taxon>
        <taxon>Eutheria</taxon>
        <taxon>Euarchontoglires</taxon>
        <taxon>Primates</taxon>
        <taxon>Haplorrhini</taxon>
        <taxon>Catarrhini</taxon>
        <taxon>Hominidae</taxon>
        <taxon>Pongo</taxon>
    </lineage>
</organism>
<reference key="1">
    <citation type="submission" date="2004-11" db="EMBL/GenBank/DDBJ databases">
        <authorList>
            <consortium name="The German cDNA consortium"/>
        </authorList>
    </citation>
    <scope>NUCLEOTIDE SEQUENCE [LARGE SCALE MRNA]</scope>
    <source>
        <tissue>Brain cortex</tissue>
    </source>
</reference>
<sequence>MSALEKSMHLGRLPSRPPLPGSGGSQSGAKMRMGPGRKRDFSPVPWSQYFESMEDVEVENETGKDTFRVYKSGSEGPVLLLLHGGGHSALSWAVFTAAIISRVQCRIVALDLRSHGETKVKNPEDLSAETMAKDVGNVVEAMYGDLPPPIMLIGHSMGGAIAVHTASSNLVPSLLGLCMIGVVEGTAMDALNSMQNFLRGRPKTFKSLENAIEWSVKSGQIRNLESARVSMVGQVKQCEGITSPEGSKSIVEGIIEEEEEDEEGSESISKRKKEDDMETKKDHPYTWRIELAKTEKYWDGWFRGLSNLFLSCPIPKLLLLAGVDRLDKDLTIGQMQGKFQMQVLPQCGHAVHEDAPDKVAEAVATFLIRHRFAEPIGGFQCVFPGC</sequence>
<accession>Q5R4F9</accession>